<organism>
    <name type="scientific">Aspergillus ruber (strain CBS 135680)</name>
    <dbReference type="NCBI Taxonomy" id="1388766"/>
    <lineage>
        <taxon>Eukaryota</taxon>
        <taxon>Fungi</taxon>
        <taxon>Dikarya</taxon>
        <taxon>Ascomycota</taxon>
        <taxon>Pezizomycotina</taxon>
        <taxon>Eurotiomycetes</taxon>
        <taxon>Eurotiomycetidae</taxon>
        <taxon>Eurotiales</taxon>
        <taxon>Aspergillaceae</taxon>
        <taxon>Aspergillus</taxon>
        <taxon>Aspergillus subgen. Aspergillus</taxon>
    </lineage>
</organism>
<proteinExistence type="inferred from homology"/>
<evidence type="ECO:0000250" key="1">
    <source>
        <dbReference type="UniProtKB" id="L0E2Z4"/>
    </source>
</evidence>
<evidence type="ECO:0000250" key="2">
    <source>
        <dbReference type="UniProtKB" id="O93868"/>
    </source>
</evidence>
<evidence type="ECO:0000269" key="3">
    <source>
    </source>
</evidence>
<evidence type="ECO:0000303" key="4">
    <source>
    </source>
</evidence>
<evidence type="ECO:0000305" key="5"/>
<evidence type="ECO:0000305" key="6">
    <source>
    </source>
</evidence>
<name>FOGB_ASPRC</name>
<keyword id="KW-0521">NADP</keyword>
<keyword id="KW-0560">Oxidoreductase</keyword>
<keyword id="KW-1185">Reference proteome</keyword>
<sequence length="273" mass="28263">MDITGNAFVVGGGGGIGKACALAFATEGATVVAVADLDAKKAVEVAAECQALAPSAEFRAIGVQIDITQEDSVRSATEQVVQLLGRIDYCVNCAGIGVQQGADIATLPLAEFRRFLDVNTIGMFLVTREVSAAMRAQEPRLVSSESPRRGTTRGAIVNLASVLSVVAAPGIIPYTASKHAVLGLTKNAALDNVSHGIRVNCVCPSWVDTPMVQQAEEGVQGLTQFIKSVVPMGRIAVPEEIADAVIFLASPRSSYVTGSGFIVDGGTTLTAMS</sequence>
<feature type="chain" id="PRO_0000456591" description="Short-chain dehydrogenase fogB">
    <location>
        <begin position="1"/>
        <end position="273"/>
    </location>
</feature>
<feature type="active site" description="Proton donor" evidence="2">
    <location>
        <position position="174"/>
    </location>
</feature>
<feature type="active site" description="Lowers pKa of active site Tyr" evidence="2">
    <location>
        <position position="178"/>
    </location>
</feature>
<feature type="binding site" evidence="1">
    <location>
        <position position="16"/>
    </location>
    <ligand>
        <name>NADP(+)</name>
        <dbReference type="ChEBI" id="CHEBI:58349"/>
    </ligand>
</feature>
<feature type="binding site" evidence="1">
    <location>
        <position position="66"/>
    </location>
    <ligand>
        <name>NADP(+)</name>
        <dbReference type="ChEBI" id="CHEBI:58349"/>
    </ligand>
</feature>
<feature type="binding site" evidence="1">
    <location>
        <position position="128"/>
    </location>
    <ligand>
        <name>NADP(+)</name>
        <dbReference type="ChEBI" id="CHEBI:58349"/>
    </ligand>
</feature>
<feature type="binding site" evidence="2">
    <location>
        <position position="174"/>
    </location>
    <ligand>
        <name>NADP(+)</name>
        <dbReference type="ChEBI" id="CHEBI:58349"/>
    </ligand>
</feature>
<feature type="binding site" evidence="2">
    <location>
        <position position="178"/>
    </location>
    <ligand>
        <name>NADP(+)</name>
        <dbReference type="ChEBI" id="CHEBI:58349"/>
    </ligand>
</feature>
<feature type="binding site" evidence="2">
    <location>
        <position position="207"/>
    </location>
    <ligand>
        <name>NADP(+)</name>
        <dbReference type="ChEBI" id="CHEBI:58349"/>
    </ligand>
</feature>
<feature type="binding site" evidence="1">
    <location>
        <position position="209"/>
    </location>
    <ligand>
        <name>NADP(+)</name>
        <dbReference type="ChEBI" id="CHEBI:58349"/>
    </ligand>
</feature>
<accession>P9WES5</accession>
<accession>A0A017SEE6</accession>
<reference key="1">
    <citation type="journal article" date="2014" name="Nat. Commun.">
        <title>Genomic adaptations of the halophilic Dead Sea filamentous fungus Eurotium rubrum.</title>
        <authorList>
            <person name="Kis-Papo T."/>
            <person name="Weig A.R."/>
            <person name="Riley R."/>
            <person name="Persoh D."/>
            <person name="Salamov A."/>
            <person name="Sun H."/>
            <person name="Lipzen A."/>
            <person name="Wasser S.P."/>
            <person name="Rambold G."/>
            <person name="Grigoriev I.V."/>
            <person name="Nevo E."/>
        </authorList>
    </citation>
    <scope>NUCLEOTIDE SEQUENCE [LARGE SCALE GENOMIC DNA]</scope>
    <source>
        <strain>CBS 135680</strain>
    </source>
</reference>
<reference key="2">
    <citation type="journal article" date="2020" name="Org. Lett.">
        <title>Biosynthesis of the prenylated salicylaldehyde flavoglaucin requires temporary reduction to salicyl alcohol for decoration before reoxidation to the final product.</title>
        <authorList>
            <person name="Nies J."/>
            <person name="Ran H."/>
            <person name="Wohlgemuth V."/>
            <person name="Yin W.B."/>
            <person name="Li S.M."/>
        </authorList>
    </citation>
    <scope>FUNCTION</scope>
    <scope>DISRUPTION PHENOTYPE</scope>
    <scope>PATHWAY</scope>
</reference>
<gene>
    <name evidence="4" type="primary">fogB</name>
    <name type="ORF">EURHEDRAFT_377419</name>
</gene>
<protein>
    <recommendedName>
        <fullName evidence="4">Short-chain dehydrogenase fogB</fullName>
        <ecNumber evidence="6">1.1.1.-</ecNumber>
    </recommendedName>
    <alternativeName>
        <fullName evidence="4">Flavoglaucin biosynthesis cluster protein B</fullName>
    </alternativeName>
</protein>
<comment type="function">
    <text evidence="3">Short-chain dehydrogenase; part of the gene cluster that mediates the biosynthesis of flavoglaucin and congeners (including aspergin, dihydroauroglaucin and auroglaucin), prenylated salicylaldehyde derivatives carrying a saturated or an unsaturated C-7 side chain (PubMed:32134669). The PKS fogA releases the carboxylic acid (8E,10E,12E)-3,5,7-trihydroxytetradeca-8,10,12-trienoic acid as its product, as well as derivatives with one and two double bonds (PubMed:32134669). FogA is indeed able to reduce the initial triketide, thus being at least partially responsible for the differently saturated heptyl side chains of flavoglaucin congeners (PubMed:32134669). The oxidoreductases fogB, fogC and fogD modify the nascent polyketide in fogA-bound form and, together, fogA, fogB, fogC and fogD are necessary for the formation of the aromatic core and the cyclized PKS products are released as salicyl alcohols (PubMed:32134669). In particular, fogB is responsible for oxidation of a hydroxyl group or reduction of remaining double bond(s) at the C-7 residue whereas fogD is probably involved in the reductive release of the modified PKS products (PubMed:32134669). The cytochrome P450 monooxygenase fogE is then responsible for the hydroxylation at C-3 of the benzene ring (PubMed:32134669). The fogE products are substrates of the prenyltransferase fogH and the prenylated benzyl alcohols are subsequently oxidized by the fogF to produce the final aryl aldehydes flavoglaucin and congeners (PubMed:32134669). The short-chain dehydrogenase fogG does not seem to be involved in the biosynthesis of the prenylated salicylaldehyde derivatives (PubMed:32134669).</text>
</comment>
<comment type="disruption phenotype">
    <text evidence="3">Impairs the production of flavoglaucin and congeners.</text>
</comment>
<comment type="similarity">
    <text evidence="5">Belongs to the short-chain dehydrogenases/reductases (SDR) family.</text>
</comment>
<comment type="sequence caution" evidence="3">
    <conflict type="erroneous gene model prediction">
        <sequence resource="EMBL-CDS" id="EYE95337"/>
    </conflict>
    <text>The predicted gene has been split into 2 genes: fogB and fogC.</text>
</comment>
<dbReference type="EC" id="1.1.1.-" evidence="6"/>
<dbReference type="EMBL" id="KK088422">
    <property type="protein sequence ID" value="EYE95337.1"/>
    <property type="status" value="ALT_SEQ"/>
    <property type="molecule type" value="Genomic_DNA"/>
</dbReference>
<dbReference type="SMR" id="P9WES5"/>
<dbReference type="HOGENOM" id="CLU_649009_0_0_1"/>
<dbReference type="OrthoDB" id="5840532at2759"/>
<dbReference type="Proteomes" id="UP000019804">
    <property type="component" value="Unassembled WGS sequence"/>
</dbReference>
<dbReference type="GO" id="GO:0016491">
    <property type="term" value="F:oxidoreductase activity"/>
    <property type="evidence" value="ECO:0007669"/>
    <property type="project" value="UniProtKB-KW"/>
</dbReference>
<dbReference type="GO" id="GO:0044550">
    <property type="term" value="P:secondary metabolite biosynthetic process"/>
    <property type="evidence" value="ECO:0007669"/>
    <property type="project" value="UniProtKB-ARBA"/>
</dbReference>
<dbReference type="CDD" id="cd05233">
    <property type="entry name" value="SDR_c"/>
    <property type="match status" value="1"/>
</dbReference>
<dbReference type="FunFam" id="3.40.50.720:FF:000084">
    <property type="entry name" value="Short-chain dehydrogenase reductase"/>
    <property type="match status" value="1"/>
</dbReference>
<dbReference type="Gene3D" id="3.40.50.720">
    <property type="entry name" value="NAD(P)-binding Rossmann-like Domain"/>
    <property type="match status" value="1"/>
</dbReference>
<dbReference type="InterPro" id="IPR036291">
    <property type="entry name" value="NAD(P)-bd_dom_sf"/>
</dbReference>
<dbReference type="InterPro" id="IPR020904">
    <property type="entry name" value="Sc_DH/Rdtase_CS"/>
</dbReference>
<dbReference type="InterPro" id="IPR002347">
    <property type="entry name" value="SDR_fam"/>
</dbReference>
<dbReference type="PANTHER" id="PTHR24321">
    <property type="entry name" value="DEHYDROGENASES, SHORT CHAIN"/>
    <property type="match status" value="1"/>
</dbReference>
<dbReference type="PANTHER" id="PTHR24321:SF12">
    <property type="entry name" value="SHORT-CHAIN DEHYDROGENASE_REDUCTASE FAMILY, PUTATIVE (AFU_ORTHOLOGUE AFUA_5G14340)-RELATED"/>
    <property type="match status" value="1"/>
</dbReference>
<dbReference type="Pfam" id="PF13561">
    <property type="entry name" value="adh_short_C2"/>
    <property type="match status" value="1"/>
</dbReference>
<dbReference type="PRINTS" id="PR00081">
    <property type="entry name" value="GDHRDH"/>
</dbReference>
<dbReference type="PRINTS" id="PR00080">
    <property type="entry name" value="SDRFAMILY"/>
</dbReference>
<dbReference type="SUPFAM" id="SSF51735">
    <property type="entry name" value="NAD(P)-binding Rossmann-fold domains"/>
    <property type="match status" value="1"/>
</dbReference>
<dbReference type="PROSITE" id="PS00061">
    <property type="entry name" value="ADH_SHORT"/>
    <property type="match status" value="1"/>
</dbReference>